<name>PLSX_SHEPA</name>
<organism>
    <name type="scientific">Shewanella pealeana (strain ATCC 700345 / ANG-SQ1)</name>
    <dbReference type="NCBI Taxonomy" id="398579"/>
    <lineage>
        <taxon>Bacteria</taxon>
        <taxon>Pseudomonadati</taxon>
        <taxon>Pseudomonadota</taxon>
        <taxon>Gammaproteobacteria</taxon>
        <taxon>Alteromonadales</taxon>
        <taxon>Shewanellaceae</taxon>
        <taxon>Shewanella</taxon>
    </lineage>
</organism>
<gene>
    <name evidence="1" type="primary">plsX</name>
    <name type="ordered locus">Spea_2497</name>
</gene>
<proteinExistence type="inferred from homology"/>
<sequence>MTNLTLALDAMGGDFGPRITVPASLQALRLNPLLKIVLVGDKTQIDEYIASAEPAIKRRIEIKHTTEVVAMSDRPVHALRNRKQSSMRLAIELVRDGKAQACLSAGNTGALMAMSKVLLKTLPGIDRPALVSCLPAVNNTPVYLLDLGANISCDSETLFQFAVMGSVLCETVDKTVSPKVALLNVGIEEIKGNDQVQQAGQLLQQIPQINYTGFIEGDEIYSGNVDVIVCDGFVGNITLKTSEGIARLLIHQLKKSLSDGFFVKILAKIIAPRIRSLLNQMNPDHYNGASLIGLRGIVVKSHGCADEAAFLQAITLAVTEAQRRLPQMIEDRLESILLDINS</sequence>
<dbReference type="EC" id="2.3.1.274" evidence="1"/>
<dbReference type="EMBL" id="CP000851">
    <property type="protein sequence ID" value="ABV87817.1"/>
    <property type="molecule type" value="Genomic_DNA"/>
</dbReference>
<dbReference type="RefSeq" id="WP_012155725.1">
    <property type="nucleotide sequence ID" value="NC_009901.1"/>
</dbReference>
<dbReference type="SMR" id="A8H5I0"/>
<dbReference type="STRING" id="398579.Spea_2497"/>
<dbReference type="KEGG" id="spl:Spea_2497"/>
<dbReference type="eggNOG" id="COG0416">
    <property type="taxonomic scope" value="Bacteria"/>
</dbReference>
<dbReference type="HOGENOM" id="CLU_039379_1_0_6"/>
<dbReference type="OrthoDB" id="9806408at2"/>
<dbReference type="UniPathway" id="UPA00085"/>
<dbReference type="Proteomes" id="UP000002608">
    <property type="component" value="Chromosome"/>
</dbReference>
<dbReference type="GO" id="GO:0005737">
    <property type="term" value="C:cytoplasm"/>
    <property type="evidence" value="ECO:0007669"/>
    <property type="project" value="UniProtKB-SubCell"/>
</dbReference>
<dbReference type="GO" id="GO:0043811">
    <property type="term" value="F:phosphate:acyl-[acyl carrier protein] acyltransferase activity"/>
    <property type="evidence" value="ECO:0007669"/>
    <property type="project" value="UniProtKB-UniRule"/>
</dbReference>
<dbReference type="GO" id="GO:0006633">
    <property type="term" value="P:fatty acid biosynthetic process"/>
    <property type="evidence" value="ECO:0007669"/>
    <property type="project" value="UniProtKB-UniRule"/>
</dbReference>
<dbReference type="GO" id="GO:0008654">
    <property type="term" value="P:phospholipid biosynthetic process"/>
    <property type="evidence" value="ECO:0007669"/>
    <property type="project" value="UniProtKB-KW"/>
</dbReference>
<dbReference type="Gene3D" id="3.40.718.10">
    <property type="entry name" value="Isopropylmalate Dehydrogenase"/>
    <property type="match status" value="1"/>
</dbReference>
<dbReference type="HAMAP" id="MF_00019">
    <property type="entry name" value="PlsX"/>
    <property type="match status" value="1"/>
</dbReference>
<dbReference type="InterPro" id="IPR003664">
    <property type="entry name" value="FA_synthesis"/>
</dbReference>
<dbReference type="InterPro" id="IPR012281">
    <property type="entry name" value="Phospholipid_synth_PlsX-like"/>
</dbReference>
<dbReference type="NCBIfam" id="TIGR00182">
    <property type="entry name" value="plsX"/>
    <property type="match status" value="1"/>
</dbReference>
<dbReference type="PANTHER" id="PTHR30100">
    <property type="entry name" value="FATTY ACID/PHOSPHOLIPID SYNTHESIS PROTEIN PLSX"/>
    <property type="match status" value="1"/>
</dbReference>
<dbReference type="PANTHER" id="PTHR30100:SF1">
    <property type="entry name" value="PHOSPHATE ACYLTRANSFERASE"/>
    <property type="match status" value="1"/>
</dbReference>
<dbReference type="Pfam" id="PF02504">
    <property type="entry name" value="FA_synthesis"/>
    <property type="match status" value="1"/>
</dbReference>
<dbReference type="PIRSF" id="PIRSF002465">
    <property type="entry name" value="Phsphlp_syn_PlsX"/>
    <property type="match status" value="1"/>
</dbReference>
<dbReference type="SUPFAM" id="SSF53659">
    <property type="entry name" value="Isocitrate/Isopropylmalate dehydrogenase-like"/>
    <property type="match status" value="1"/>
</dbReference>
<evidence type="ECO:0000255" key="1">
    <source>
        <dbReference type="HAMAP-Rule" id="MF_00019"/>
    </source>
</evidence>
<keyword id="KW-0963">Cytoplasm</keyword>
<keyword id="KW-0444">Lipid biosynthesis</keyword>
<keyword id="KW-0443">Lipid metabolism</keyword>
<keyword id="KW-0594">Phospholipid biosynthesis</keyword>
<keyword id="KW-1208">Phospholipid metabolism</keyword>
<keyword id="KW-1185">Reference proteome</keyword>
<keyword id="KW-0808">Transferase</keyword>
<accession>A8H5I0</accession>
<comment type="function">
    <text evidence="1">Catalyzes the reversible formation of acyl-phosphate (acyl-PO(4)) from acyl-[acyl-carrier-protein] (acyl-ACP). This enzyme utilizes acyl-ACP as fatty acyl donor, but not acyl-CoA.</text>
</comment>
<comment type="catalytic activity">
    <reaction evidence="1">
        <text>a fatty acyl-[ACP] + phosphate = an acyl phosphate + holo-[ACP]</text>
        <dbReference type="Rhea" id="RHEA:42292"/>
        <dbReference type="Rhea" id="RHEA-COMP:9685"/>
        <dbReference type="Rhea" id="RHEA-COMP:14125"/>
        <dbReference type="ChEBI" id="CHEBI:43474"/>
        <dbReference type="ChEBI" id="CHEBI:59918"/>
        <dbReference type="ChEBI" id="CHEBI:64479"/>
        <dbReference type="ChEBI" id="CHEBI:138651"/>
        <dbReference type="EC" id="2.3.1.274"/>
    </reaction>
</comment>
<comment type="pathway">
    <text evidence="1">Lipid metabolism; phospholipid metabolism.</text>
</comment>
<comment type="subunit">
    <text evidence="1">Homodimer. Probably interacts with PlsY.</text>
</comment>
<comment type="subcellular location">
    <subcellularLocation>
        <location evidence="1">Cytoplasm</location>
    </subcellularLocation>
    <text evidence="1">Associated with the membrane possibly through PlsY.</text>
</comment>
<comment type="similarity">
    <text evidence="1">Belongs to the PlsX family.</text>
</comment>
<protein>
    <recommendedName>
        <fullName evidence="1">Phosphate acyltransferase</fullName>
        <ecNumber evidence="1">2.3.1.274</ecNumber>
    </recommendedName>
    <alternativeName>
        <fullName evidence="1">Acyl-ACP phosphotransacylase</fullName>
    </alternativeName>
    <alternativeName>
        <fullName evidence="1">Acyl-[acyl-carrier-protein]--phosphate acyltransferase</fullName>
    </alternativeName>
    <alternativeName>
        <fullName evidence="1">Phosphate-acyl-ACP acyltransferase</fullName>
    </alternativeName>
</protein>
<reference key="1">
    <citation type="submission" date="2007-10" db="EMBL/GenBank/DDBJ databases">
        <title>Complete sequence of Shewanella pealeana ATCC 700345.</title>
        <authorList>
            <consortium name="US DOE Joint Genome Institute"/>
            <person name="Copeland A."/>
            <person name="Lucas S."/>
            <person name="Lapidus A."/>
            <person name="Barry K."/>
            <person name="Glavina del Rio T."/>
            <person name="Dalin E."/>
            <person name="Tice H."/>
            <person name="Pitluck S."/>
            <person name="Chertkov O."/>
            <person name="Brettin T."/>
            <person name="Bruce D."/>
            <person name="Detter J.C."/>
            <person name="Han C."/>
            <person name="Schmutz J."/>
            <person name="Larimer F."/>
            <person name="Land M."/>
            <person name="Hauser L."/>
            <person name="Kyrpides N."/>
            <person name="Kim E."/>
            <person name="Zhao J.-S.Z."/>
            <person name="Manno D."/>
            <person name="Hawari J."/>
            <person name="Richardson P."/>
        </authorList>
    </citation>
    <scope>NUCLEOTIDE SEQUENCE [LARGE SCALE GENOMIC DNA]</scope>
    <source>
        <strain>ATCC 700345 / ANG-SQ1</strain>
    </source>
</reference>
<feature type="chain" id="PRO_1000074173" description="Phosphate acyltransferase">
    <location>
        <begin position="1"/>
        <end position="342"/>
    </location>
</feature>